<proteinExistence type="evidence at protein level"/>
<gene>
    <name evidence="5" type="primary">kk1A</name>
    <name evidence="4" type="synonym">OMT</name>
    <name type="ORF">TRAF135002</name>
</gene>
<organism>
    <name type="scientific">Curvularia clavata</name>
    <dbReference type="NCBI Taxonomy" id="95742"/>
    <lineage>
        <taxon>Eukaryota</taxon>
        <taxon>Fungi</taxon>
        <taxon>Dikarya</taxon>
        <taxon>Ascomycota</taxon>
        <taxon>Pezizomycotina</taxon>
        <taxon>Dothideomycetes</taxon>
        <taxon>Pleosporomycetidae</taxon>
        <taxon>Pleosporales</taxon>
        <taxon>Pleosporineae</taxon>
        <taxon>Pleosporaceae</taxon>
        <taxon>Curvularia</taxon>
    </lineage>
</organism>
<name>KK1A_CURCL</name>
<reference key="1">
    <citation type="journal article" date="2018" name="Front. Microbiol.">
        <title>Heterologous production of a novel cyclic peptide compound, KK-1, in Aspergillus oryzae.</title>
        <authorList>
            <person name="Yoshimi A."/>
            <person name="Yamaguchi S."/>
            <person name="Fujioka T."/>
            <person name="Kawai K."/>
            <person name="Gomi K."/>
            <person name="Machida M."/>
            <person name="Abe K."/>
        </authorList>
    </citation>
    <scope>NUCLEOTIDE SEQUENCE [GENOMIC DNA]</scope>
    <scope>FUNCTION</scope>
    <scope>PATHWAY</scope>
    <source>
        <strain>BAUA-2787</strain>
    </source>
</reference>
<reference key="2">
    <citation type="journal article" date="2022" name="Front. Fungal Biol.">
        <title>Discovery of a gene cluster for the biosynthesis of novel cyclic peptide compound, KK-1, in Curvularia clavata.</title>
        <authorList>
            <person name="Yamaguchi S."/>
            <person name="Fujioka T."/>
            <person name="Yoshimi A."/>
            <person name="Kumagai T."/>
            <person name="Umemura M."/>
            <person name="Abe K."/>
            <person name="Machida M."/>
            <person name="Kawai K."/>
        </authorList>
    </citation>
    <scope>FUNCTION</scope>
    <scope>INDUCTION</scope>
    <scope>DISRUPTION PHENOTYPE</scope>
    <scope>CATALYTIC ACTIVITY</scope>
    <scope>PATHWAY</scope>
</reference>
<feature type="chain" id="PRO_0000450431" description="O-methyltransferase kk1A">
    <location>
        <begin position="1"/>
        <end position="422"/>
    </location>
</feature>
<feature type="active site" description="Proton acceptor" evidence="1">
    <location>
        <position position="320"/>
    </location>
</feature>
<feature type="binding site" evidence="1">
    <location>
        <position position="277"/>
    </location>
    <ligand>
        <name>S-adenosyl-L-methionine</name>
        <dbReference type="ChEBI" id="CHEBI:59789"/>
    </ligand>
</feature>
<dbReference type="EC" id="2.1.1.-" evidence="1 3"/>
<dbReference type="EMBL" id="LC371755">
    <property type="protein sequence ID" value="BBC83956.1"/>
    <property type="molecule type" value="Genomic_DNA"/>
</dbReference>
<dbReference type="SMR" id="A0A348AXX3"/>
<dbReference type="VEuPathDB" id="FungiDB:yc1106_06631"/>
<dbReference type="GO" id="GO:0008171">
    <property type="term" value="F:O-methyltransferase activity"/>
    <property type="evidence" value="ECO:0007669"/>
    <property type="project" value="InterPro"/>
</dbReference>
<dbReference type="GO" id="GO:0046983">
    <property type="term" value="F:protein dimerization activity"/>
    <property type="evidence" value="ECO:0007669"/>
    <property type="project" value="InterPro"/>
</dbReference>
<dbReference type="GO" id="GO:0032259">
    <property type="term" value="P:methylation"/>
    <property type="evidence" value="ECO:0007669"/>
    <property type="project" value="UniProtKB-KW"/>
</dbReference>
<dbReference type="GO" id="GO:0044550">
    <property type="term" value="P:secondary metabolite biosynthetic process"/>
    <property type="evidence" value="ECO:0007669"/>
    <property type="project" value="UniProtKB-ARBA"/>
</dbReference>
<dbReference type="Gene3D" id="3.40.50.150">
    <property type="entry name" value="Vaccinia Virus protein VP39"/>
    <property type="match status" value="1"/>
</dbReference>
<dbReference type="Gene3D" id="1.10.10.10">
    <property type="entry name" value="Winged helix-like DNA-binding domain superfamily/Winged helix DNA-binding domain"/>
    <property type="match status" value="1"/>
</dbReference>
<dbReference type="InterPro" id="IPR016461">
    <property type="entry name" value="COMT-like"/>
</dbReference>
<dbReference type="InterPro" id="IPR001077">
    <property type="entry name" value="O_MeTrfase_dom"/>
</dbReference>
<dbReference type="InterPro" id="IPR012967">
    <property type="entry name" value="Plant_O-MeTrfase_dimerisation"/>
</dbReference>
<dbReference type="InterPro" id="IPR029063">
    <property type="entry name" value="SAM-dependent_MTases_sf"/>
</dbReference>
<dbReference type="InterPro" id="IPR036388">
    <property type="entry name" value="WH-like_DNA-bd_sf"/>
</dbReference>
<dbReference type="InterPro" id="IPR036390">
    <property type="entry name" value="WH_DNA-bd_sf"/>
</dbReference>
<dbReference type="PANTHER" id="PTHR43712">
    <property type="entry name" value="PUTATIVE (AFU_ORTHOLOGUE AFUA_4G14580)-RELATED"/>
    <property type="match status" value="1"/>
</dbReference>
<dbReference type="PANTHER" id="PTHR43712:SF12">
    <property type="entry name" value="STERIGMATOCYSTIN 8-O-METHYLTRANSFERASE"/>
    <property type="match status" value="1"/>
</dbReference>
<dbReference type="Pfam" id="PF08100">
    <property type="entry name" value="Dimerisation"/>
    <property type="match status" value="1"/>
</dbReference>
<dbReference type="Pfam" id="PF00891">
    <property type="entry name" value="Methyltransf_2"/>
    <property type="match status" value="1"/>
</dbReference>
<dbReference type="SUPFAM" id="SSF53335">
    <property type="entry name" value="S-adenosyl-L-methionine-dependent methyltransferases"/>
    <property type="match status" value="1"/>
</dbReference>
<dbReference type="SUPFAM" id="SSF46785">
    <property type="entry name" value="Winged helix' DNA-binding domain"/>
    <property type="match status" value="1"/>
</dbReference>
<dbReference type="PROSITE" id="PS51683">
    <property type="entry name" value="SAM_OMT_II"/>
    <property type="match status" value="1"/>
</dbReference>
<evidence type="ECO:0000255" key="1">
    <source>
        <dbReference type="PROSITE-ProRule" id="PRU01020"/>
    </source>
</evidence>
<evidence type="ECO:0000269" key="2">
    <source>
    </source>
</evidence>
<evidence type="ECO:0000269" key="3">
    <source>
    </source>
</evidence>
<evidence type="ECO:0000303" key="4">
    <source>
    </source>
</evidence>
<evidence type="ECO:0000303" key="5">
    <source>
    </source>
</evidence>
<evidence type="ECO:0000305" key="6">
    <source>
    </source>
</evidence>
<accession>A0A348AXX3</accession>
<keyword id="KW-0489">Methyltransferase</keyword>
<keyword id="KW-0949">S-adenosyl-L-methionine</keyword>
<keyword id="KW-0808">Transferase</keyword>
<comment type="function">
    <text evidence="2 3 6">O-methyltransferase; part of the gene cluster that mediates the biosynthesis of KK-1, a novel cyclic depsipeptide with 10 residues which is a promising active compound with high activity against many plant pathogens, especially Botrytis cinerea (PubMed:29686660, PubMed:37746209). Within the pathway, kk1A is responsible for the O-methylation of tyrosine as a free amino acid before its activation as an aminoacyl-AMP by the corresponding A domain of kk1B (PubMed:37746209). The nonribosomal peptide synthetase (NRPS) kk1B catalyzes the elongation and cyclization of the decapeptide chain composed of 1 D-lactic acid residue (D-Lac), 1 pipecolic acid residue (Pip), 1 aspartic acid residue (Asp), 1 isoleucine residue (Ile), 1 glycine residue (Gly), 1 tyrosine residue (Tyr) and 4 valine residues (Val). The Asp, Ile and 3 Val residues are N-methylated by the 5 methyltransferase domains from the NRPS (found in modules 3, 5, 6, 7 and 9), whereas the Tyr residue is O-methylated by the cluster encoded O-methyltransferase kk1A. The thioesterase kk1J is likely to be involved in the corrective mechanism of peptide chain synthesis. The D-lactate dehydrogenase kk1H is involved in the synthesis of D-lactic acid from pyruvic acid, which is recognized by the A domain of the first kk1B module. The pyrroline-5-carboxylate reductase kk1I is involved in the synthesis of the L-pipecolic acid residue of KK-1 from delta-1-pyrroline-5-carboxylate (P5C), a metabolic intermediate of lysine. It is still unclear how kk1C and kk1D are involved in the production of KK-1 (Probable).</text>
</comment>
<comment type="pathway">
    <text evidence="2 3">Secondary metabolite biosynthesis.</text>
</comment>
<comment type="induction">
    <text evidence="3">Expression is positively regulated by the KK-1 cluster-specific transcription factor kk1F.</text>
</comment>
<comment type="disruption phenotype">
    <text evidence="3">Prevents the conversion of free tyrosine to O-methyltyrosine and, consequently, the synthesis of KK-1 (PubMed:37746209). Does not affect the incorporation pattern of unmethylated normal tyrosine by the A domain of the 10th module of kk1B (PubMed:37746209).</text>
</comment>
<comment type="similarity">
    <text evidence="1">Belongs to the class I-like SAM-binding methyltransferase superfamily. Cation-independent O-methyltransferase family.</text>
</comment>
<protein>
    <recommendedName>
        <fullName evidence="5">O-methyltransferase kk1A</fullName>
        <shortName evidence="4">OMT</shortName>
        <ecNumber evidence="1 3">2.1.1.-</ecNumber>
    </recommendedName>
    <alternativeName>
        <fullName evidence="5">KK-1 biosynthesis cluster protein A</fullName>
    </alternativeName>
</protein>
<sequence>MDPRQSRITELAIAIKKQTETLQSLLDSLKVATPSFSVNANQELPRNAAVQLAQSSILDSCTELQDLVEGPLAHVGRIMSPRVHISSALQAIVHFNIAEKIAKHETISFGEIAKRCKMDVDDVKRIMRLAISYRIFKESHIGFVNHTASSFLIAENLLVRQWISLCCDEFIPAGSFLVPAMKKWPSSEEPNETAFALLHKGDSLWEVLKKQPEKAQRFAHGMEYMRTLPPFDINHLFTSLNWEIDCEMVLVDVGGSQGSIAEALLRRHPRLRCYVQDLPETLSKAVVPKDLKGRLEFVSHSMFKEQPIKADVYLLRSILHDWLDGYALQIIRNLIPALEVGSKVIINEICLPEPNAISAYEAQLIRGYDLSMKQQFNSKERDVHEWETLFRLADRRFKLNRIVNPPGSFLAVLEFEWQPTTP</sequence>